<accession>A7TEF4</accession>
<organism>
    <name type="scientific">Vanderwaltozyma polyspora (strain ATCC 22028 / DSM 70294 / BCRC 21397 / CBS 2163 / NBRC 10782 / NRRL Y-8283 / UCD 57-17)</name>
    <name type="common">Kluyveromyces polysporus</name>
    <dbReference type="NCBI Taxonomy" id="436907"/>
    <lineage>
        <taxon>Eukaryota</taxon>
        <taxon>Fungi</taxon>
        <taxon>Dikarya</taxon>
        <taxon>Ascomycota</taxon>
        <taxon>Saccharomycotina</taxon>
        <taxon>Saccharomycetes</taxon>
        <taxon>Saccharomycetales</taxon>
        <taxon>Saccharomycetaceae</taxon>
        <taxon>Vanderwaltozyma</taxon>
    </lineage>
</organism>
<evidence type="ECO:0000250" key="1"/>
<evidence type="ECO:0000255" key="2">
    <source>
        <dbReference type="PROSITE-ProRule" id="PRU00541"/>
    </source>
</evidence>
<evidence type="ECO:0000255" key="3">
    <source>
        <dbReference type="PROSITE-ProRule" id="PRU00542"/>
    </source>
</evidence>
<evidence type="ECO:0000305" key="4"/>
<sequence length="399" mass="45005">MSFSREEDKKLKFKTSKKLKISPTFESMNLKDDLLRGIYGYGFEAPSAIQSRAITQIISGTDVIAQAQSGTGKTATFTIGMLQAIDLKRKDLQALVLSPTRELASQINQVVSNLGDYMNVQSYAMTGGKTMKDDLNRMQKNGCQVVSGTPGRVLDMFKRHLLNTRNVQMLILDEADELLGESLGFKQQIYDIFTKLPAACQVVVVSATMSKDILEVTKKFMSDPVKILVKRDEISLEGIKQYYVNVEKEDWKFDTLCDLYDSLTITQCVIFCNTKKKVDWLSAKLTQSNFAVVSMHGDMKQEDRNKVMSDFRSGHSRVLISTDVWARGIDVQQVSLVINYDIPEIMENYIHRIGRSGRFGRKGVAINFITSSDLSKMKEIEKYYRIKISPVPADLSTIS</sequence>
<dbReference type="EC" id="3.6.4.13"/>
<dbReference type="EMBL" id="DS480380">
    <property type="protein sequence ID" value="EDO19261.1"/>
    <property type="molecule type" value="Genomic_DNA"/>
</dbReference>
<dbReference type="RefSeq" id="XP_001647119.1">
    <property type="nucleotide sequence ID" value="XM_001647069.1"/>
</dbReference>
<dbReference type="SMR" id="A7TEF4"/>
<dbReference type="FunCoup" id="A7TEF4">
    <property type="interactions" value="727"/>
</dbReference>
<dbReference type="STRING" id="436907.A7TEF4"/>
<dbReference type="GeneID" id="5547596"/>
<dbReference type="KEGG" id="vpo:Kpol_1036p3"/>
<dbReference type="eggNOG" id="KOG0328">
    <property type="taxonomic scope" value="Eukaryota"/>
</dbReference>
<dbReference type="HOGENOM" id="CLU_003041_1_0_1"/>
<dbReference type="InParanoid" id="A7TEF4"/>
<dbReference type="OMA" id="DTIHGDK"/>
<dbReference type="OrthoDB" id="10265785at2759"/>
<dbReference type="PhylomeDB" id="A7TEF4"/>
<dbReference type="Proteomes" id="UP000000267">
    <property type="component" value="Unassembled WGS sequence"/>
</dbReference>
<dbReference type="GO" id="GO:0097078">
    <property type="term" value="C:FAL1-SGD1 complex"/>
    <property type="evidence" value="ECO:0007669"/>
    <property type="project" value="EnsemblFungi"/>
</dbReference>
<dbReference type="GO" id="GO:0005730">
    <property type="term" value="C:nucleolus"/>
    <property type="evidence" value="ECO:0007669"/>
    <property type="project" value="UniProtKB-SubCell"/>
</dbReference>
<dbReference type="GO" id="GO:0030688">
    <property type="term" value="C:preribosome, small subunit precursor"/>
    <property type="evidence" value="ECO:0007669"/>
    <property type="project" value="EnsemblFungi"/>
</dbReference>
<dbReference type="GO" id="GO:0032040">
    <property type="term" value="C:small-subunit processome"/>
    <property type="evidence" value="ECO:0007669"/>
    <property type="project" value="EnsemblFungi"/>
</dbReference>
<dbReference type="GO" id="GO:0005524">
    <property type="term" value="F:ATP binding"/>
    <property type="evidence" value="ECO:0007669"/>
    <property type="project" value="UniProtKB-KW"/>
</dbReference>
<dbReference type="GO" id="GO:0016887">
    <property type="term" value="F:ATP hydrolysis activity"/>
    <property type="evidence" value="ECO:0007669"/>
    <property type="project" value="RHEA"/>
</dbReference>
<dbReference type="GO" id="GO:0003723">
    <property type="term" value="F:RNA binding"/>
    <property type="evidence" value="ECO:0007669"/>
    <property type="project" value="UniProtKB-KW"/>
</dbReference>
<dbReference type="GO" id="GO:0003724">
    <property type="term" value="F:RNA helicase activity"/>
    <property type="evidence" value="ECO:0007669"/>
    <property type="project" value="UniProtKB-EC"/>
</dbReference>
<dbReference type="GO" id="GO:0000462">
    <property type="term" value="P:maturation of SSU-rRNA from tricistronic rRNA transcript (SSU-rRNA, 5.8S rRNA, LSU-rRNA)"/>
    <property type="evidence" value="ECO:0007669"/>
    <property type="project" value="EnsemblFungi"/>
</dbReference>
<dbReference type="CDD" id="cd18787">
    <property type="entry name" value="SF2_C_DEAD"/>
    <property type="match status" value="1"/>
</dbReference>
<dbReference type="FunFam" id="3.40.50.300:FF:000849">
    <property type="entry name" value="ATP-dependent RNA helicase DBP5"/>
    <property type="match status" value="1"/>
</dbReference>
<dbReference type="FunFam" id="3.40.50.300:FF:000031">
    <property type="entry name" value="Eukaryotic initiation factor 4A-III"/>
    <property type="match status" value="1"/>
</dbReference>
<dbReference type="Gene3D" id="3.40.50.300">
    <property type="entry name" value="P-loop containing nucleotide triphosphate hydrolases"/>
    <property type="match status" value="2"/>
</dbReference>
<dbReference type="InterPro" id="IPR011545">
    <property type="entry name" value="DEAD/DEAH_box_helicase_dom"/>
</dbReference>
<dbReference type="InterPro" id="IPR014001">
    <property type="entry name" value="Helicase_ATP-bd"/>
</dbReference>
<dbReference type="InterPro" id="IPR001650">
    <property type="entry name" value="Helicase_C-like"/>
</dbReference>
<dbReference type="InterPro" id="IPR027417">
    <property type="entry name" value="P-loop_NTPase"/>
</dbReference>
<dbReference type="InterPro" id="IPR000629">
    <property type="entry name" value="RNA-helicase_DEAD-box_CS"/>
</dbReference>
<dbReference type="InterPro" id="IPR014014">
    <property type="entry name" value="RNA_helicase_DEAD_Q_motif"/>
</dbReference>
<dbReference type="PANTHER" id="PTHR47958">
    <property type="entry name" value="ATP-DEPENDENT RNA HELICASE DBP3"/>
    <property type="match status" value="1"/>
</dbReference>
<dbReference type="Pfam" id="PF00270">
    <property type="entry name" value="DEAD"/>
    <property type="match status" value="1"/>
</dbReference>
<dbReference type="Pfam" id="PF00271">
    <property type="entry name" value="Helicase_C"/>
    <property type="match status" value="1"/>
</dbReference>
<dbReference type="SMART" id="SM00487">
    <property type="entry name" value="DEXDc"/>
    <property type="match status" value="1"/>
</dbReference>
<dbReference type="SMART" id="SM00490">
    <property type="entry name" value="HELICc"/>
    <property type="match status" value="1"/>
</dbReference>
<dbReference type="SUPFAM" id="SSF52540">
    <property type="entry name" value="P-loop containing nucleoside triphosphate hydrolases"/>
    <property type="match status" value="2"/>
</dbReference>
<dbReference type="PROSITE" id="PS00039">
    <property type="entry name" value="DEAD_ATP_HELICASE"/>
    <property type="match status" value="1"/>
</dbReference>
<dbReference type="PROSITE" id="PS51192">
    <property type="entry name" value="HELICASE_ATP_BIND_1"/>
    <property type="match status" value="1"/>
</dbReference>
<dbReference type="PROSITE" id="PS51194">
    <property type="entry name" value="HELICASE_CTER"/>
    <property type="match status" value="1"/>
</dbReference>
<dbReference type="PROSITE" id="PS51195">
    <property type="entry name" value="Q_MOTIF"/>
    <property type="match status" value="1"/>
</dbReference>
<feature type="chain" id="PRO_0000310178" description="ATP-dependent RNA helicase FAL1">
    <location>
        <begin position="1"/>
        <end position="399"/>
    </location>
</feature>
<feature type="domain" description="Helicase ATP-binding" evidence="2">
    <location>
        <begin position="54"/>
        <end position="227"/>
    </location>
</feature>
<feature type="domain" description="Helicase C-terminal" evidence="3">
    <location>
        <begin position="238"/>
        <end position="399"/>
    </location>
</feature>
<feature type="short sequence motif" description="Q motif">
    <location>
        <begin position="23"/>
        <end position="51"/>
    </location>
</feature>
<feature type="short sequence motif" description="DEAD box">
    <location>
        <begin position="173"/>
        <end position="176"/>
    </location>
</feature>
<feature type="binding site" evidence="2">
    <location>
        <begin position="67"/>
        <end position="74"/>
    </location>
    <ligand>
        <name>ATP</name>
        <dbReference type="ChEBI" id="CHEBI:30616"/>
    </ligand>
</feature>
<proteinExistence type="inferred from homology"/>
<keyword id="KW-0067">ATP-binding</keyword>
<keyword id="KW-0347">Helicase</keyword>
<keyword id="KW-0378">Hydrolase</keyword>
<keyword id="KW-0547">Nucleotide-binding</keyword>
<keyword id="KW-0539">Nucleus</keyword>
<keyword id="KW-1185">Reference proteome</keyword>
<keyword id="KW-0690">Ribosome biogenesis</keyword>
<keyword id="KW-0694">RNA-binding</keyword>
<keyword id="KW-0698">rRNA processing</keyword>
<gene>
    <name type="primary">FAL1</name>
    <name type="ORF">Kpol_1036p3</name>
</gene>
<protein>
    <recommendedName>
        <fullName>ATP-dependent RNA helicase FAL1</fullName>
        <ecNumber>3.6.4.13</ecNumber>
    </recommendedName>
</protein>
<reference key="1">
    <citation type="journal article" date="2007" name="Proc. Natl. Acad. Sci. U.S.A.">
        <title>Independent sorting-out of thousands of duplicated gene pairs in two yeast species descended from a whole-genome duplication.</title>
        <authorList>
            <person name="Scannell D.R."/>
            <person name="Frank A.C."/>
            <person name="Conant G.C."/>
            <person name="Byrne K.P."/>
            <person name="Woolfit M."/>
            <person name="Wolfe K.H."/>
        </authorList>
    </citation>
    <scope>NUCLEOTIDE SEQUENCE [LARGE SCALE GENOMIC DNA]</scope>
    <source>
        <strain>ATCC 22028 / DSM 70294 / BCRC 21397 / CBS 2163 / NBRC 10782 / NRRL Y-8283 / UCD 57-17</strain>
    </source>
</reference>
<name>FAL1_VANPO</name>
<comment type="function">
    <text evidence="1">ATP-dependent RNA helicase involved in 40S ribosomal subunit biogenesis. Required for the processing and cleavage of 35S pre-rRNA at sites A0, A1, and A2, leading to mature 18S rRNA (By similarity).</text>
</comment>
<comment type="catalytic activity">
    <reaction>
        <text>ATP + H2O = ADP + phosphate + H(+)</text>
        <dbReference type="Rhea" id="RHEA:13065"/>
        <dbReference type="ChEBI" id="CHEBI:15377"/>
        <dbReference type="ChEBI" id="CHEBI:15378"/>
        <dbReference type="ChEBI" id="CHEBI:30616"/>
        <dbReference type="ChEBI" id="CHEBI:43474"/>
        <dbReference type="ChEBI" id="CHEBI:456216"/>
        <dbReference type="EC" id="3.6.4.13"/>
    </reaction>
</comment>
<comment type="subcellular location">
    <subcellularLocation>
        <location evidence="1">Nucleus</location>
        <location evidence="1">Nucleolus</location>
    </subcellularLocation>
</comment>
<comment type="domain">
    <text>The Q motif is unique to and characteristic of the DEAD box family of RNA helicases and controls ATP binding and hydrolysis.</text>
</comment>
<comment type="similarity">
    <text evidence="4">Belongs to the DEAD box helicase family. DDX48/FAL1 subfamily.</text>
</comment>